<name>CPNE6_BOVIN</name>
<dbReference type="EMBL" id="BC112841">
    <property type="protein sequence ID" value="AAI12842.1"/>
    <property type="molecule type" value="mRNA"/>
</dbReference>
<dbReference type="RefSeq" id="NP_001039455.1">
    <property type="nucleotide sequence ID" value="NM_001045990.2"/>
</dbReference>
<dbReference type="RefSeq" id="XP_005211342.1">
    <property type="nucleotide sequence ID" value="XM_005211285.3"/>
</dbReference>
<dbReference type="RefSeq" id="XP_010807201.1">
    <property type="nucleotide sequence ID" value="XM_010808899.2"/>
</dbReference>
<dbReference type="RefSeq" id="XP_024853140.1">
    <property type="nucleotide sequence ID" value="XM_024997372.2"/>
</dbReference>
<dbReference type="RefSeq" id="XP_024853141.1">
    <property type="nucleotide sequence ID" value="XM_024997373.2"/>
</dbReference>
<dbReference type="SMR" id="Q2KHY1"/>
<dbReference type="FunCoup" id="Q2KHY1">
    <property type="interactions" value="315"/>
</dbReference>
<dbReference type="STRING" id="9913.ENSBTAP00000002436"/>
<dbReference type="PaxDb" id="9913-ENSBTAP00000002436"/>
<dbReference type="PeptideAtlas" id="Q2KHY1"/>
<dbReference type="GeneID" id="508059"/>
<dbReference type="KEGG" id="bta:508059"/>
<dbReference type="CTD" id="9362"/>
<dbReference type="VEuPathDB" id="HostDB:ENSBTAG00000001870"/>
<dbReference type="eggNOG" id="KOG1327">
    <property type="taxonomic scope" value="Eukaryota"/>
</dbReference>
<dbReference type="HOGENOM" id="CLU_020452_4_0_1"/>
<dbReference type="InParanoid" id="Q2KHY1"/>
<dbReference type="OMA" id="YKTNRDQ"/>
<dbReference type="OrthoDB" id="5855668at2759"/>
<dbReference type="TreeFam" id="TF316419"/>
<dbReference type="Reactome" id="R-BTA-1483206">
    <property type="pathway name" value="Glycerophospholipid biosynthesis"/>
</dbReference>
<dbReference type="Proteomes" id="UP000009136">
    <property type="component" value="Chromosome 10"/>
</dbReference>
<dbReference type="Bgee" id="ENSBTAG00000001870">
    <property type="expression patterns" value="Expressed in Ammon's horn and 28 other cell types or tissues"/>
</dbReference>
<dbReference type="GO" id="GO:0030424">
    <property type="term" value="C:axon"/>
    <property type="evidence" value="ECO:0000250"/>
    <property type="project" value="UniProtKB"/>
</dbReference>
<dbReference type="GO" id="GO:0030136">
    <property type="term" value="C:clathrin-coated vesicle"/>
    <property type="evidence" value="ECO:0007669"/>
    <property type="project" value="UniProtKB-SubCell"/>
</dbReference>
<dbReference type="GO" id="GO:0030425">
    <property type="term" value="C:dendrite"/>
    <property type="evidence" value="ECO:0000250"/>
    <property type="project" value="UniProtKB"/>
</dbReference>
<dbReference type="GO" id="GO:0005768">
    <property type="term" value="C:endosome"/>
    <property type="evidence" value="ECO:0007669"/>
    <property type="project" value="UniProtKB-SubCell"/>
</dbReference>
<dbReference type="GO" id="GO:0016020">
    <property type="term" value="C:membrane"/>
    <property type="evidence" value="ECO:0000250"/>
    <property type="project" value="UniProtKB"/>
</dbReference>
<dbReference type="GO" id="GO:0043204">
    <property type="term" value="C:perikaryon"/>
    <property type="evidence" value="ECO:0007669"/>
    <property type="project" value="UniProtKB-SubCell"/>
</dbReference>
<dbReference type="GO" id="GO:0005886">
    <property type="term" value="C:plasma membrane"/>
    <property type="evidence" value="ECO:0000318"/>
    <property type="project" value="GO_Central"/>
</dbReference>
<dbReference type="GO" id="GO:0005544">
    <property type="term" value="F:calcium-dependent phospholipid binding"/>
    <property type="evidence" value="ECO:0000318"/>
    <property type="project" value="GO_Central"/>
</dbReference>
<dbReference type="GO" id="GO:0046872">
    <property type="term" value="F:metal ion binding"/>
    <property type="evidence" value="ECO:0007669"/>
    <property type="project" value="UniProtKB-KW"/>
</dbReference>
<dbReference type="GO" id="GO:0001786">
    <property type="term" value="F:phosphatidylserine binding"/>
    <property type="evidence" value="ECO:0000250"/>
    <property type="project" value="UniProtKB"/>
</dbReference>
<dbReference type="GO" id="GO:0030154">
    <property type="term" value="P:cell differentiation"/>
    <property type="evidence" value="ECO:0007669"/>
    <property type="project" value="UniProtKB-KW"/>
</dbReference>
<dbReference type="GO" id="GO:0071277">
    <property type="term" value="P:cellular response to calcium ion"/>
    <property type="evidence" value="ECO:0000318"/>
    <property type="project" value="GO_Central"/>
</dbReference>
<dbReference type="CDD" id="cd04048">
    <property type="entry name" value="C2A_Copine"/>
    <property type="match status" value="1"/>
</dbReference>
<dbReference type="CDD" id="cd04047">
    <property type="entry name" value="C2B_Copine"/>
    <property type="match status" value="1"/>
</dbReference>
<dbReference type="CDD" id="cd01459">
    <property type="entry name" value="vWA_copine_like"/>
    <property type="match status" value="1"/>
</dbReference>
<dbReference type="FunFam" id="2.60.40.150:FF:000063">
    <property type="entry name" value="Copine 4"/>
    <property type="match status" value="1"/>
</dbReference>
<dbReference type="FunFam" id="2.60.40.150:FF:000126">
    <property type="entry name" value="Copine 6"/>
    <property type="match status" value="1"/>
</dbReference>
<dbReference type="Gene3D" id="2.60.40.150">
    <property type="entry name" value="C2 domain"/>
    <property type="match status" value="2"/>
</dbReference>
<dbReference type="InterPro" id="IPR000008">
    <property type="entry name" value="C2_dom"/>
</dbReference>
<dbReference type="InterPro" id="IPR035892">
    <property type="entry name" value="C2_domain_sf"/>
</dbReference>
<dbReference type="InterPro" id="IPR037768">
    <property type="entry name" value="C2B_Copine"/>
</dbReference>
<dbReference type="InterPro" id="IPR045052">
    <property type="entry name" value="Copine"/>
</dbReference>
<dbReference type="InterPro" id="IPR010734">
    <property type="entry name" value="Copine_C"/>
</dbReference>
<dbReference type="InterPro" id="IPR002035">
    <property type="entry name" value="VWF_A"/>
</dbReference>
<dbReference type="InterPro" id="IPR036465">
    <property type="entry name" value="vWFA_dom_sf"/>
</dbReference>
<dbReference type="PANTHER" id="PTHR10857">
    <property type="entry name" value="COPINE"/>
    <property type="match status" value="1"/>
</dbReference>
<dbReference type="PANTHER" id="PTHR10857:SF5">
    <property type="entry name" value="COPINE-6"/>
    <property type="match status" value="1"/>
</dbReference>
<dbReference type="Pfam" id="PF00168">
    <property type="entry name" value="C2"/>
    <property type="match status" value="2"/>
</dbReference>
<dbReference type="Pfam" id="PF07002">
    <property type="entry name" value="Copine"/>
    <property type="match status" value="1"/>
</dbReference>
<dbReference type="SMART" id="SM00239">
    <property type="entry name" value="C2"/>
    <property type="match status" value="2"/>
</dbReference>
<dbReference type="SMART" id="SM00327">
    <property type="entry name" value="VWA"/>
    <property type="match status" value="1"/>
</dbReference>
<dbReference type="SUPFAM" id="SSF49562">
    <property type="entry name" value="C2 domain (Calcium/lipid-binding domain, CaLB)"/>
    <property type="match status" value="2"/>
</dbReference>
<dbReference type="SUPFAM" id="SSF53300">
    <property type="entry name" value="vWA-like"/>
    <property type="match status" value="1"/>
</dbReference>
<dbReference type="PROSITE" id="PS50004">
    <property type="entry name" value="C2"/>
    <property type="match status" value="2"/>
</dbReference>
<gene>
    <name evidence="1" type="primary">CPNE6</name>
</gene>
<feature type="chain" id="PRO_0000249765" description="Copine-6">
    <location>
        <begin position="1"/>
        <end position="557"/>
    </location>
</feature>
<feature type="domain" description="C2 1" evidence="4">
    <location>
        <begin position="1"/>
        <end position="127"/>
    </location>
</feature>
<feature type="domain" description="C2 2" evidence="4">
    <location>
        <begin position="134"/>
        <end position="263"/>
    </location>
</feature>
<feature type="domain" description="VWFA" evidence="5">
    <location>
        <begin position="306"/>
        <end position="526"/>
    </location>
</feature>
<feature type="region of interest" description="Linker region" evidence="3">
    <location>
        <begin position="244"/>
        <end position="303"/>
    </location>
</feature>
<feature type="binding site" evidence="4">
    <location>
        <position position="167"/>
    </location>
    <ligand>
        <name>Ca(2+)</name>
        <dbReference type="ChEBI" id="CHEBI:29108"/>
        <label>1</label>
    </ligand>
</feature>
<feature type="binding site" evidence="4">
    <location>
        <position position="167"/>
    </location>
    <ligand>
        <name>Ca(2+)</name>
        <dbReference type="ChEBI" id="CHEBI:29108"/>
        <label>2</label>
    </ligand>
</feature>
<feature type="binding site" evidence="4">
    <location>
        <position position="173"/>
    </location>
    <ligand>
        <name>Ca(2+)</name>
        <dbReference type="ChEBI" id="CHEBI:29108"/>
        <label>1</label>
    </ligand>
</feature>
<feature type="binding site" evidence="4">
    <location>
        <position position="229"/>
    </location>
    <ligand>
        <name>Ca(2+)</name>
        <dbReference type="ChEBI" id="CHEBI:29108"/>
        <label>1</label>
    </ligand>
</feature>
<feature type="binding site" evidence="4">
    <location>
        <position position="229"/>
    </location>
    <ligand>
        <name>Ca(2+)</name>
        <dbReference type="ChEBI" id="CHEBI:29108"/>
        <label>2</label>
    </ligand>
</feature>
<feature type="binding site" evidence="4">
    <location>
        <position position="231"/>
    </location>
    <ligand>
        <name>Ca(2+)</name>
        <dbReference type="ChEBI" id="CHEBI:29108"/>
        <label>1</label>
    </ligand>
</feature>
<feature type="binding site" evidence="4">
    <location>
        <position position="231"/>
    </location>
    <ligand>
        <name>Ca(2+)</name>
        <dbReference type="ChEBI" id="CHEBI:29108"/>
        <label>2</label>
    </ligand>
</feature>
<feature type="binding site" evidence="4">
    <location>
        <position position="237"/>
    </location>
    <ligand>
        <name>Ca(2+)</name>
        <dbReference type="ChEBI" id="CHEBI:29108"/>
        <label>2</label>
    </ligand>
</feature>
<accession>Q2KHY1</accession>
<comment type="function">
    <text evidence="1 3">Calcium-dependent phospholipid-binding protein that plays a role in calcium-mediated intracellular processes. Binds phospholipid membranes in a calcium-dependent manner. Plays a role in dendrite formation by melanocytes.</text>
</comment>
<comment type="cofactor">
    <cofactor evidence="4">
        <name>Ca(2+)</name>
        <dbReference type="ChEBI" id="CHEBI:29108"/>
    </cofactor>
</comment>
<comment type="subunit">
    <text evidence="1 3">Interacts (via second C2 domain) with OS9 (via C-terminus); this interaction occurs in a calcium-dependent manner in vitro. May interact with NECAB1.</text>
</comment>
<comment type="subcellular location">
    <subcellularLocation>
        <location evidence="3">Cytoplasm</location>
    </subcellularLocation>
    <subcellularLocation>
        <location evidence="3">Cell membrane</location>
    </subcellularLocation>
    <subcellularLocation>
        <location evidence="3">Endosome</location>
    </subcellularLocation>
    <subcellularLocation>
        <location evidence="3">Cytoplasmic vesicle</location>
        <location evidence="3">Clathrin-coated vesicle</location>
    </subcellularLocation>
    <subcellularLocation>
        <location evidence="3">Perikaryon</location>
    </subcellularLocation>
    <subcellularLocation>
        <location evidence="3">Cell projection</location>
        <location evidence="3">Dendrite</location>
    </subcellularLocation>
    <text evidence="3">Mainly cytoplasmic in absence of calcium. Associated predominantly with membranes in presence of calcium. Translocates to the cell membrane in a calcium-dependent manner. Colocalized with transferrin in intracellular clathrin-coated membrane vesicles in a calcium-dependent manner.</text>
</comment>
<comment type="domain">
    <text evidence="3">The C2 domain 1 binds phospholipids in a calcium-independent manner and is not necessary for calcium-mediated translocation and association to the plasma membrane. The C2 domain 2 binds phospholipids in a calcium-dependent manner and is necessary for calcium-mediated translocation and association to the plasma membrane. The linker region contributes to the calcium-dependent translocation and association to the plasma membrane. The VWFA domain is necessary for association with intracellular clathrin-coated vesicles in a calcium-dependent manner.</text>
</comment>
<comment type="similarity">
    <text evidence="6">Belongs to the copine family.</text>
</comment>
<organism>
    <name type="scientific">Bos taurus</name>
    <name type="common">Bovine</name>
    <dbReference type="NCBI Taxonomy" id="9913"/>
    <lineage>
        <taxon>Eukaryota</taxon>
        <taxon>Metazoa</taxon>
        <taxon>Chordata</taxon>
        <taxon>Craniata</taxon>
        <taxon>Vertebrata</taxon>
        <taxon>Euteleostomi</taxon>
        <taxon>Mammalia</taxon>
        <taxon>Eutheria</taxon>
        <taxon>Laurasiatheria</taxon>
        <taxon>Artiodactyla</taxon>
        <taxon>Ruminantia</taxon>
        <taxon>Pecora</taxon>
        <taxon>Bovidae</taxon>
        <taxon>Bovinae</taxon>
        <taxon>Bos</taxon>
    </lineage>
</organism>
<proteinExistence type="evidence at transcript level"/>
<protein>
    <recommendedName>
        <fullName evidence="6">Copine-6</fullName>
    </recommendedName>
    <alternativeName>
        <fullName evidence="2">Copine VI</fullName>
    </alternativeName>
</protein>
<keyword id="KW-0106">Calcium</keyword>
<keyword id="KW-1003">Cell membrane</keyword>
<keyword id="KW-0966">Cell projection</keyword>
<keyword id="KW-0963">Cytoplasm</keyword>
<keyword id="KW-0968">Cytoplasmic vesicle</keyword>
<keyword id="KW-0221">Differentiation</keyword>
<keyword id="KW-0967">Endosome</keyword>
<keyword id="KW-0472">Membrane</keyword>
<keyword id="KW-0479">Metal-binding</keyword>
<keyword id="KW-1185">Reference proteome</keyword>
<keyword id="KW-0677">Repeat</keyword>
<reference key="1">
    <citation type="submission" date="2006-01" db="EMBL/GenBank/DDBJ databases">
        <authorList>
            <consortium name="NIH - Mammalian Gene Collection (MGC) project"/>
        </authorList>
    </citation>
    <scope>NUCLEOTIDE SEQUENCE [LARGE SCALE MRNA]</scope>
    <source>
        <strain>Hereford</strain>
        <tissue>Hypothalamus</tissue>
    </source>
</reference>
<evidence type="ECO:0000250" key="1">
    <source>
        <dbReference type="UniProtKB" id="O95741"/>
    </source>
</evidence>
<evidence type="ECO:0000250" key="2">
    <source>
        <dbReference type="UniProtKB" id="Q99829"/>
    </source>
</evidence>
<evidence type="ECO:0000250" key="3">
    <source>
        <dbReference type="UniProtKB" id="Q9Z140"/>
    </source>
</evidence>
<evidence type="ECO:0000255" key="4">
    <source>
        <dbReference type="PROSITE-ProRule" id="PRU00041"/>
    </source>
</evidence>
<evidence type="ECO:0000255" key="5">
    <source>
        <dbReference type="PROSITE-ProRule" id="PRU00219"/>
    </source>
</evidence>
<evidence type="ECO:0000305" key="6"/>
<sequence length="557" mass="61865">MSDPEMAWVPEPPAMTLGASRVELRVSCHGLLDRDTLTKPHPCVLLKLHSDEQWVEVERTEVLRSCSSPVFSRVLALEYFFEEKQPLQFHVFDAEDGSTSPRNDTFLGSTECTLGQIVSQTKVTKPLLLKNGKNAGKSTITIVAEEVSGTNDYVQLTFRAHKLDNKDLFSKSDPFMEIYKTNGDQSDQLVWRTEVVKNNLNPSWEPFRLSLHSLCSCDVHRPLKFLVYDYDSSGKHDFIGEFTSTFQEMQEGTANPGQEMQWDCINPKYRDKKKHYKSSGTVVLAQCTVEKVHTFLDYIMGGCQISFTVAIDFTASNGDPRSSQSLHCLSPRQPNHYLQALRAVGGICQDYDSDKRFPAFGFGARIPPNFEVSHDFAINFDPENPECEEISGVIASYRRCLPQIQLYGPTNVAPIINRVAGPAQREQSTGQATKYSVLLVLTDGVVSDMAETRTAIVRASRLPMSIIIVGVGNADFSDMRLLDGDDGTLRCPRGVPAARDIVQFVPFRDFKDASPSALAKCVLAEVPRQVVEYYASQGISPGAPRPCTPAMTPSPSP</sequence>